<organism>
    <name type="scientific">Bos taurus</name>
    <name type="common">Bovine</name>
    <dbReference type="NCBI Taxonomy" id="9913"/>
    <lineage>
        <taxon>Eukaryota</taxon>
        <taxon>Metazoa</taxon>
        <taxon>Chordata</taxon>
        <taxon>Craniata</taxon>
        <taxon>Vertebrata</taxon>
        <taxon>Euteleostomi</taxon>
        <taxon>Mammalia</taxon>
        <taxon>Eutheria</taxon>
        <taxon>Laurasiatheria</taxon>
        <taxon>Artiodactyla</taxon>
        <taxon>Ruminantia</taxon>
        <taxon>Pecora</taxon>
        <taxon>Bovidae</taxon>
        <taxon>Bovinae</taxon>
        <taxon>Bos</taxon>
    </lineage>
</organism>
<keyword id="KW-0217">Developmental protein</keyword>
<keyword id="KW-0472">Membrane</keyword>
<keyword id="KW-1185">Reference proteome</keyword>
<keyword id="KW-0812">Transmembrane</keyword>
<keyword id="KW-1133">Transmembrane helix</keyword>
<name>RTL1_BOVIN</name>
<comment type="function">
    <text evidence="1">Plays an essential role in capillaries endothelial cells for the maintenance of feto-maternal interface and for development of the placenta.</text>
</comment>
<comment type="subcellular location">
    <subcellularLocation>
        <location evidence="4">Membrane</location>
        <topology evidence="4">Multi-pass membrane protein</topology>
    </subcellularLocation>
</comment>
<dbReference type="EMBL" id="AAFC03050876">
    <property type="status" value="NOT_ANNOTATED_CDS"/>
    <property type="molecule type" value="Genomic_DNA"/>
</dbReference>
<dbReference type="EMBL" id="AY986480">
    <property type="protein sequence ID" value="AAX84834.1"/>
    <property type="molecule type" value="mRNA"/>
</dbReference>
<dbReference type="RefSeq" id="NP_001181949.1">
    <property type="nucleotide sequence ID" value="NM_001195020.1"/>
</dbReference>
<dbReference type="SMR" id="Q52QI2"/>
<dbReference type="FunCoup" id="Q52QI2">
    <property type="interactions" value="11"/>
</dbReference>
<dbReference type="STRING" id="9913.ENSBTAP00000055386"/>
<dbReference type="PaxDb" id="9913-ENSBTAP00000055386"/>
<dbReference type="Ensembl" id="ENSBTAT00000065107.3">
    <property type="protein sequence ID" value="ENSBTAP00000055386.1"/>
    <property type="gene ID" value="ENSBTAG00000046585.3"/>
</dbReference>
<dbReference type="Ensembl" id="ENSBTAT00000094857.1">
    <property type="protein sequence ID" value="ENSBTAP00000098590.1"/>
    <property type="gene ID" value="ENSBTAG00000046585.3"/>
</dbReference>
<dbReference type="Ensembl" id="ENSBTAT00000095940.1">
    <property type="protein sequence ID" value="ENSBTAP00000085277.1"/>
    <property type="gene ID" value="ENSBTAG00000046585.3"/>
</dbReference>
<dbReference type="Ensembl" id="ENSBTAT00000128826.1">
    <property type="protein sequence ID" value="ENSBTAP00000093691.1"/>
    <property type="gene ID" value="ENSBTAG00000046585.3"/>
</dbReference>
<dbReference type="GeneID" id="606737"/>
<dbReference type="KEGG" id="bta:606737"/>
<dbReference type="CTD" id="388015"/>
<dbReference type="VEuPathDB" id="HostDB:ENSBTAG00000046585"/>
<dbReference type="VGNC" id="VGNC:34199">
    <property type="gene designation" value="RTL1"/>
</dbReference>
<dbReference type="eggNOG" id="KOG0017">
    <property type="taxonomic scope" value="Eukaryota"/>
</dbReference>
<dbReference type="GeneTree" id="ENSGT00950000183173"/>
<dbReference type="HOGENOM" id="CLU_002743_1_0_1"/>
<dbReference type="InParanoid" id="Q52QI2"/>
<dbReference type="OMA" id="EFIVLCQ"/>
<dbReference type="OrthoDB" id="8000983at2759"/>
<dbReference type="TreeFam" id="TF342365"/>
<dbReference type="Proteomes" id="UP000009136">
    <property type="component" value="Chromosome 21"/>
</dbReference>
<dbReference type="Bgee" id="ENSBTAG00000046585">
    <property type="expression patterns" value="Expressed in placenta and 24 other cell types or tissues"/>
</dbReference>
<dbReference type="GO" id="GO:0016020">
    <property type="term" value="C:membrane"/>
    <property type="evidence" value="ECO:0007669"/>
    <property type="project" value="UniProtKB-SubCell"/>
</dbReference>
<dbReference type="CDD" id="cd00303">
    <property type="entry name" value="retropepsin_like"/>
    <property type="match status" value="1"/>
</dbReference>
<dbReference type="CDD" id="cd01647">
    <property type="entry name" value="RT_LTR"/>
    <property type="match status" value="1"/>
</dbReference>
<dbReference type="Gene3D" id="3.30.70.270">
    <property type="match status" value="2"/>
</dbReference>
<dbReference type="Gene3D" id="2.40.70.10">
    <property type="entry name" value="Acid Proteases"/>
    <property type="match status" value="1"/>
</dbReference>
<dbReference type="InterPro" id="IPR043502">
    <property type="entry name" value="DNA/RNA_pol_sf"/>
</dbReference>
<dbReference type="InterPro" id="IPR032549">
    <property type="entry name" value="DUF4939"/>
</dbReference>
<dbReference type="InterPro" id="IPR021109">
    <property type="entry name" value="Peptidase_aspartic_dom_sf"/>
</dbReference>
<dbReference type="InterPro" id="IPR043128">
    <property type="entry name" value="Rev_trsase/Diguanyl_cyclase"/>
</dbReference>
<dbReference type="InterPro" id="IPR041577">
    <property type="entry name" value="RT_RNaseH_2"/>
</dbReference>
<dbReference type="InterPro" id="IPR032567">
    <property type="entry name" value="RTL1-rel"/>
</dbReference>
<dbReference type="PANTHER" id="PTHR15503">
    <property type="entry name" value="LDOC1 RELATED"/>
    <property type="match status" value="1"/>
</dbReference>
<dbReference type="PANTHER" id="PTHR15503:SF39">
    <property type="entry name" value="RETROTRANSPOSON-LIKE PROTEIN 1"/>
    <property type="match status" value="1"/>
</dbReference>
<dbReference type="Pfam" id="PF16297">
    <property type="entry name" value="DUF4939"/>
    <property type="match status" value="1"/>
</dbReference>
<dbReference type="Pfam" id="PF17919">
    <property type="entry name" value="RT_RNaseH_2"/>
    <property type="match status" value="1"/>
</dbReference>
<dbReference type="SUPFAM" id="SSF56672">
    <property type="entry name" value="DNA/RNA polymerases"/>
    <property type="match status" value="1"/>
</dbReference>
<proteinExistence type="evidence at transcript level"/>
<protein>
    <recommendedName>
        <fullName>Retrotransposon-like protein 1</fullName>
    </recommendedName>
    <alternativeName>
        <fullName>Paternally expressed gene 11 protein homolog</fullName>
    </alternativeName>
    <alternativeName>
        <fullName>Retrotransposon-derived protein PEG11</fullName>
    </alternativeName>
</protein>
<accession>Q52QI2</accession>
<reference key="1">
    <citation type="journal article" date="2009" name="Science">
        <title>The genome sequence of taurine cattle: a window to ruminant biology and evolution.</title>
        <authorList>
            <consortium name="The bovine genome sequencing and analysis consortium"/>
        </authorList>
    </citation>
    <scope>NUCLEOTIDE SEQUENCE [LARGE SCALE GENOMIC DNA]</scope>
    <source>
        <strain>Hereford</strain>
    </source>
</reference>
<reference key="2">
    <citation type="submission" date="2005-03" db="EMBL/GenBank/DDBJ databases">
        <title>mRNA sequence of bovine PEG11 and PEG11AS.</title>
        <authorList>
            <person name="Vuocolo T."/>
            <person name="Tellam R.L."/>
        </authorList>
    </citation>
    <scope>NUCLEOTIDE SEQUENCE [MRNA] OF 511-1280</scope>
    <source>
        <tissue>Placenta</tissue>
    </source>
</reference>
<sequence length="1331" mass="151448">MMEPSEDSFETMMERKNPSSKQMESSEGSSNTTVETPPGGRVEAAGLASGLAQEMGEQSIDLRQDMEEPSSGPHREIKDPPNDLLQDLEESCEGSHLEEGGPFGGAPGEMEEEEDNPWESQEDQDYYTDLAESEEDESPEEPDSSTVEVMGMVRSIISLYFRMQDLREQQRVAEEILMNAINKGQLPNPKQFSGDRREYHEFIVLCQLILQSYPRVFCNDRLRVGYIISHLSGMAMEWAGDLLERESSVIDDFPAFLEAMNDTFEYRQALRVAEDAMFNLRQGDRAAIEYINEFQSLVPTLGWPDEVLQAHLCQGLKEDIRQYLFRIPQPNSLENLITLVLQIEDKLAERRAILRLLPESRPRHLTWLDSPVPERWTVSTWLPNEFHPGIKRNHLFLLLLVRVNPYHSVAVQALVDSGATSNYMDEGFAQEHYVELYQKPYAESVQTADGSLVGNEPVWLYTEPLVCLHQNHQESLEFDIVASSKFSVVLGIKWLQLHAPEIDWVKGRCTFHSPYCLKNCFRPPPPCIALEHHAVSLLPGLPHQYSDLADVFNPKEADEETSDQPSSDGSDDLSESEPSELQQAGDSDQSEETFYDCASTAPWEPVGAGTQEKAKQEEFWDPKDMLTSRHDYVQMIPELFDQLHGATWFTKLELRGTIVEESMSIHQTEDVWKVAFGLELQDMASYQPFLICADPIIPQGVIHFILKDMIGLFVVSYGQDVLVYSMSQEEHYHHVRQVLVRFRYHYVYCSLQRSQFHRHTAEFLGFVVTPKGVKLNKSIVSTITGYPTPGSRKSLRNLMEFAFPYRHFVERFADITEPLVRQLQADLPFYWGDEEQEAFVGLKRAFRKAPLLYHPKPQNQFYLQTGVTKTSLHASLIQMDKRTGKKVCCAFYSRNISPMEVEASPAEMKILPIRAAFMVWCRYLENTEEPIMILLNKEDLASLNNDRLTVLLPGHWVFFFTHFNFDVMEMPSSEDDQPLPRRQRLGERAQQRRVATTTRPTMLVTMPAPTGDQSPESEDEEESEGALHPDEPNGQNLQQGYLALIPVDQIFNSFLAHFSMAQIRAVLLHFYRSLLFWKNLLAMAALLVMLRFRRRLALLPAPAADPARPPQRRSLRLFLDASLLTSSGIATAVTQLFTQMPPLVGTNALPAEELAELFLGPGPWQLNALRGLQMTPRFWQMLCQFFGIRGRALEGTQTHPSPHQSLAPHVEGDEYVVLREALQDDLQRFRQCGLHDGLQDTSQDAQDDVWALRPRQHLPTEAEVLARLTYIRSTQGGSVVIHRELTARDLIDFLASVYTQALPTLVEASPPREGATLEELPSDADEDAGLD</sequence>
<feature type="chain" id="PRO_0000339232" description="Retrotransposon-like protein 1">
    <location>
        <begin position="1"/>
        <end position="1331"/>
    </location>
</feature>
<feature type="transmembrane region" description="Helical" evidence="2">
    <location>
        <begin position="1070"/>
        <end position="1090"/>
    </location>
</feature>
<feature type="transmembrane region" description="Helical" evidence="2">
    <location>
        <begin position="1117"/>
        <end position="1137"/>
    </location>
</feature>
<feature type="region of interest" description="Disordered" evidence="3">
    <location>
        <begin position="1"/>
        <end position="123"/>
    </location>
</feature>
<feature type="region of interest" description="Disordered" evidence="3">
    <location>
        <begin position="128"/>
        <end position="147"/>
    </location>
</feature>
<feature type="region of interest" description="Disordered" evidence="3">
    <location>
        <begin position="556"/>
        <end position="595"/>
    </location>
</feature>
<feature type="region of interest" description="Disordered" evidence="3">
    <location>
        <begin position="971"/>
        <end position="1033"/>
    </location>
</feature>
<feature type="region of interest" description="Disordered" evidence="3">
    <location>
        <begin position="1309"/>
        <end position="1331"/>
    </location>
</feature>
<feature type="compositionally biased region" description="Low complexity" evidence="3">
    <location>
        <begin position="19"/>
        <end position="30"/>
    </location>
</feature>
<feature type="compositionally biased region" description="Acidic residues" evidence="3">
    <location>
        <begin position="109"/>
        <end position="123"/>
    </location>
</feature>
<feature type="compositionally biased region" description="Acidic residues" evidence="3">
    <location>
        <begin position="128"/>
        <end position="143"/>
    </location>
</feature>
<feature type="compositionally biased region" description="Acidic residues" evidence="3">
    <location>
        <begin position="569"/>
        <end position="578"/>
    </location>
</feature>
<feature type="compositionally biased region" description="Low complexity" evidence="3">
    <location>
        <begin position="992"/>
        <end position="1001"/>
    </location>
</feature>
<feature type="compositionally biased region" description="Acidic residues" evidence="3">
    <location>
        <begin position="1015"/>
        <end position="1024"/>
    </location>
</feature>
<feature type="compositionally biased region" description="Acidic residues" evidence="3">
    <location>
        <begin position="1320"/>
        <end position="1331"/>
    </location>
</feature>
<feature type="sequence conflict" description="In Ref. 2; AAX84834." evidence="4" ref="2">
    <original>H</original>
    <variation>R</variation>
    <location>
        <position position="630"/>
    </location>
</feature>
<feature type="sequence conflict" description="In Ref. 2; AAX84834." evidence="4" ref="2">
    <original>N</original>
    <variation>S</variation>
    <location>
        <position position="797"/>
    </location>
</feature>
<gene>
    <name type="primary">RTL1</name>
    <name type="synonym">PEG11</name>
</gene>
<evidence type="ECO:0000250" key="1"/>
<evidence type="ECO:0000255" key="2"/>
<evidence type="ECO:0000256" key="3">
    <source>
        <dbReference type="SAM" id="MobiDB-lite"/>
    </source>
</evidence>
<evidence type="ECO:0000305" key="4"/>